<gene>
    <name evidence="13" type="primary">GOT1</name>
</gene>
<reference key="1">
    <citation type="journal article" date="1990" name="Biochemistry">
        <title>Properties of human liver cytosolic aspartate aminotransferase mRNAs generated by alternative polyadenylation site selection.</title>
        <authorList>
            <person name="Bousquet-Lemercier B."/>
            <person name="Pol S."/>
            <person name="Pave-Preux M."/>
            <person name="Hanoune J."/>
            <person name="Barouki R."/>
        </authorList>
    </citation>
    <scope>NUCLEOTIDE SEQUENCE [MRNA] (ISOFORM 1)</scope>
    <scope>SUBCELLULAR LOCATION</scope>
    <source>
        <tissue>Liver</tissue>
    </source>
</reference>
<reference key="2">
    <citation type="submission" date="1998-07" db="EMBL/GenBank/DDBJ databases">
        <title>Genomic structure and mutation analysis of GOT1 in the urofacial (Ochoa) syndrome gene critical region on chromosome 10.</title>
        <authorList>
            <person name="Wang C.Y."/>
            <person name="Huang Y.Q."/>
            <person name="Shi J.D."/>
            <person name="Marron M.P."/>
            <person name="Ruan Q.G."/>
            <person name="Hawkins-Lee B."/>
            <person name="Ochoa B."/>
            <person name="She J.X."/>
        </authorList>
    </citation>
    <scope>NUCLEOTIDE SEQUENCE [GENOMIC DNA]</scope>
</reference>
<reference key="3">
    <citation type="submission" date="1998-03" db="EMBL/GenBank/DDBJ databases">
        <authorList>
            <person name="Yu W."/>
            <person name="Sarginson J."/>
            <person name="Gibbs R.A."/>
        </authorList>
    </citation>
    <scope>NUCLEOTIDE SEQUENCE [LARGE SCALE MRNA] (ISOFORM 1)</scope>
    <source>
        <tissue>Brain</tissue>
    </source>
</reference>
<reference key="4">
    <citation type="journal article" date="2004" name="Nat. Genet.">
        <title>Complete sequencing and characterization of 21,243 full-length human cDNAs.</title>
        <authorList>
            <person name="Ota T."/>
            <person name="Suzuki Y."/>
            <person name="Nishikawa T."/>
            <person name="Otsuki T."/>
            <person name="Sugiyama T."/>
            <person name="Irie R."/>
            <person name="Wakamatsu A."/>
            <person name="Hayashi K."/>
            <person name="Sato H."/>
            <person name="Nagai K."/>
            <person name="Kimura K."/>
            <person name="Makita H."/>
            <person name="Sekine M."/>
            <person name="Obayashi M."/>
            <person name="Nishi T."/>
            <person name="Shibahara T."/>
            <person name="Tanaka T."/>
            <person name="Ishii S."/>
            <person name="Yamamoto J."/>
            <person name="Saito K."/>
            <person name="Kawai Y."/>
            <person name="Isono Y."/>
            <person name="Nakamura Y."/>
            <person name="Nagahari K."/>
            <person name="Murakami K."/>
            <person name="Yasuda T."/>
            <person name="Iwayanagi T."/>
            <person name="Wagatsuma M."/>
            <person name="Shiratori A."/>
            <person name="Sudo H."/>
            <person name="Hosoiri T."/>
            <person name="Kaku Y."/>
            <person name="Kodaira H."/>
            <person name="Kondo H."/>
            <person name="Sugawara M."/>
            <person name="Takahashi M."/>
            <person name="Kanda K."/>
            <person name="Yokoi T."/>
            <person name="Furuya T."/>
            <person name="Kikkawa E."/>
            <person name="Omura Y."/>
            <person name="Abe K."/>
            <person name="Kamihara K."/>
            <person name="Katsuta N."/>
            <person name="Sato K."/>
            <person name="Tanikawa M."/>
            <person name="Yamazaki M."/>
            <person name="Ninomiya K."/>
            <person name="Ishibashi T."/>
            <person name="Yamashita H."/>
            <person name="Murakawa K."/>
            <person name="Fujimori K."/>
            <person name="Tanai H."/>
            <person name="Kimata M."/>
            <person name="Watanabe M."/>
            <person name="Hiraoka S."/>
            <person name="Chiba Y."/>
            <person name="Ishida S."/>
            <person name="Ono Y."/>
            <person name="Takiguchi S."/>
            <person name="Watanabe S."/>
            <person name="Yosida M."/>
            <person name="Hotuta T."/>
            <person name="Kusano J."/>
            <person name="Kanehori K."/>
            <person name="Takahashi-Fujii A."/>
            <person name="Hara H."/>
            <person name="Tanase T.-O."/>
            <person name="Nomura Y."/>
            <person name="Togiya S."/>
            <person name="Komai F."/>
            <person name="Hara R."/>
            <person name="Takeuchi K."/>
            <person name="Arita M."/>
            <person name="Imose N."/>
            <person name="Musashino K."/>
            <person name="Yuuki H."/>
            <person name="Oshima A."/>
            <person name="Sasaki N."/>
            <person name="Aotsuka S."/>
            <person name="Yoshikawa Y."/>
            <person name="Matsunawa H."/>
            <person name="Ichihara T."/>
            <person name="Shiohata N."/>
            <person name="Sano S."/>
            <person name="Moriya S."/>
            <person name="Momiyama H."/>
            <person name="Satoh N."/>
            <person name="Takami S."/>
            <person name="Terashima Y."/>
            <person name="Suzuki O."/>
            <person name="Nakagawa S."/>
            <person name="Senoh A."/>
            <person name="Mizoguchi H."/>
            <person name="Goto Y."/>
            <person name="Shimizu F."/>
            <person name="Wakebe H."/>
            <person name="Hishigaki H."/>
            <person name="Watanabe T."/>
            <person name="Sugiyama A."/>
            <person name="Takemoto M."/>
            <person name="Kawakami B."/>
            <person name="Yamazaki M."/>
            <person name="Watanabe K."/>
            <person name="Kumagai A."/>
            <person name="Itakura S."/>
            <person name="Fukuzumi Y."/>
            <person name="Fujimori Y."/>
            <person name="Komiyama M."/>
            <person name="Tashiro H."/>
            <person name="Tanigami A."/>
            <person name="Fujiwara T."/>
            <person name="Ono T."/>
            <person name="Yamada K."/>
            <person name="Fujii Y."/>
            <person name="Ozaki K."/>
            <person name="Hirao M."/>
            <person name="Ohmori Y."/>
            <person name="Kawabata A."/>
            <person name="Hikiji T."/>
            <person name="Kobatake N."/>
            <person name="Inagaki H."/>
            <person name="Ikema Y."/>
            <person name="Okamoto S."/>
            <person name="Okitani R."/>
            <person name="Kawakami T."/>
            <person name="Noguchi S."/>
            <person name="Itoh T."/>
            <person name="Shigeta K."/>
            <person name="Senba T."/>
            <person name="Matsumura K."/>
            <person name="Nakajima Y."/>
            <person name="Mizuno T."/>
            <person name="Morinaga M."/>
            <person name="Sasaki M."/>
            <person name="Togashi T."/>
            <person name="Oyama M."/>
            <person name="Hata H."/>
            <person name="Watanabe M."/>
            <person name="Komatsu T."/>
            <person name="Mizushima-Sugano J."/>
            <person name="Satoh T."/>
            <person name="Shirai Y."/>
            <person name="Takahashi Y."/>
            <person name="Nakagawa K."/>
            <person name="Okumura K."/>
            <person name="Nagase T."/>
            <person name="Nomura N."/>
            <person name="Kikuchi H."/>
            <person name="Masuho Y."/>
            <person name="Yamashita R."/>
            <person name="Nakai K."/>
            <person name="Yada T."/>
            <person name="Nakamura Y."/>
            <person name="Ohara O."/>
            <person name="Isogai T."/>
            <person name="Sugano S."/>
        </authorList>
    </citation>
    <scope>NUCLEOTIDE SEQUENCE [LARGE SCALE MRNA] (ISOFORMS 1 AND 2)</scope>
    <source>
        <tissue>Testis</tissue>
    </source>
</reference>
<reference key="5">
    <citation type="journal article" date="2004" name="Nature">
        <title>The DNA sequence and comparative analysis of human chromosome 10.</title>
        <authorList>
            <person name="Deloukas P."/>
            <person name="Earthrowl M.E."/>
            <person name="Grafham D.V."/>
            <person name="Rubenfield M."/>
            <person name="French L."/>
            <person name="Steward C.A."/>
            <person name="Sims S.K."/>
            <person name="Jones M.C."/>
            <person name="Searle S."/>
            <person name="Scott C."/>
            <person name="Howe K."/>
            <person name="Hunt S.E."/>
            <person name="Andrews T.D."/>
            <person name="Gilbert J.G.R."/>
            <person name="Swarbreck D."/>
            <person name="Ashurst J.L."/>
            <person name="Taylor A."/>
            <person name="Battles J."/>
            <person name="Bird C.P."/>
            <person name="Ainscough R."/>
            <person name="Almeida J.P."/>
            <person name="Ashwell R.I.S."/>
            <person name="Ambrose K.D."/>
            <person name="Babbage A.K."/>
            <person name="Bagguley C.L."/>
            <person name="Bailey J."/>
            <person name="Banerjee R."/>
            <person name="Bates K."/>
            <person name="Beasley H."/>
            <person name="Bray-Allen S."/>
            <person name="Brown A.J."/>
            <person name="Brown J.Y."/>
            <person name="Burford D.C."/>
            <person name="Burrill W."/>
            <person name="Burton J."/>
            <person name="Cahill P."/>
            <person name="Camire D."/>
            <person name="Carter N.P."/>
            <person name="Chapman J.C."/>
            <person name="Clark S.Y."/>
            <person name="Clarke G."/>
            <person name="Clee C.M."/>
            <person name="Clegg S."/>
            <person name="Corby N."/>
            <person name="Coulson A."/>
            <person name="Dhami P."/>
            <person name="Dutta I."/>
            <person name="Dunn M."/>
            <person name="Faulkner L."/>
            <person name="Frankish A."/>
            <person name="Frankland J.A."/>
            <person name="Garner P."/>
            <person name="Garnett J."/>
            <person name="Gribble S."/>
            <person name="Griffiths C."/>
            <person name="Grocock R."/>
            <person name="Gustafson E."/>
            <person name="Hammond S."/>
            <person name="Harley J.L."/>
            <person name="Hart E."/>
            <person name="Heath P.D."/>
            <person name="Ho T.P."/>
            <person name="Hopkins B."/>
            <person name="Horne J."/>
            <person name="Howden P.J."/>
            <person name="Huckle E."/>
            <person name="Hynds C."/>
            <person name="Johnson C."/>
            <person name="Johnson D."/>
            <person name="Kana A."/>
            <person name="Kay M."/>
            <person name="Kimberley A.M."/>
            <person name="Kershaw J.K."/>
            <person name="Kokkinaki M."/>
            <person name="Laird G.K."/>
            <person name="Lawlor S."/>
            <person name="Lee H.M."/>
            <person name="Leongamornlert D.A."/>
            <person name="Laird G."/>
            <person name="Lloyd C."/>
            <person name="Lloyd D.M."/>
            <person name="Loveland J."/>
            <person name="Lovell J."/>
            <person name="McLaren S."/>
            <person name="McLay K.E."/>
            <person name="McMurray A."/>
            <person name="Mashreghi-Mohammadi M."/>
            <person name="Matthews L."/>
            <person name="Milne S."/>
            <person name="Nickerson T."/>
            <person name="Nguyen M."/>
            <person name="Overton-Larty E."/>
            <person name="Palmer S.A."/>
            <person name="Pearce A.V."/>
            <person name="Peck A.I."/>
            <person name="Pelan S."/>
            <person name="Phillimore B."/>
            <person name="Porter K."/>
            <person name="Rice C.M."/>
            <person name="Rogosin A."/>
            <person name="Ross M.T."/>
            <person name="Sarafidou T."/>
            <person name="Sehra H.K."/>
            <person name="Shownkeen R."/>
            <person name="Skuce C.D."/>
            <person name="Smith M."/>
            <person name="Standring L."/>
            <person name="Sycamore N."/>
            <person name="Tester J."/>
            <person name="Thorpe A."/>
            <person name="Torcasso W."/>
            <person name="Tracey A."/>
            <person name="Tromans A."/>
            <person name="Tsolas J."/>
            <person name="Wall M."/>
            <person name="Walsh J."/>
            <person name="Wang H."/>
            <person name="Weinstock K."/>
            <person name="West A.P."/>
            <person name="Willey D.L."/>
            <person name="Whitehead S.L."/>
            <person name="Wilming L."/>
            <person name="Wray P.W."/>
            <person name="Young L."/>
            <person name="Chen Y."/>
            <person name="Lovering R.C."/>
            <person name="Moschonas N.K."/>
            <person name="Siebert R."/>
            <person name="Fechtel K."/>
            <person name="Bentley D."/>
            <person name="Durbin R.M."/>
            <person name="Hubbard T."/>
            <person name="Doucette-Stamm L."/>
            <person name="Beck S."/>
            <person name="Smith D.R."/>
            <person name="Rogers J."/>
        </authorList>
    </citation>
    <scope>NUCLEOTIDE SEQUENCE [LARGE SCALE GENOMIC DNA]</scope>
</reference>
<reference key="6">
    <citation type="submission" date="2005-09" db="EMBL/GenBank/DDBJ databases">
        <authorList>
            <person name="Mural R.J."/>
            <person name="Istrail S."/>
            <person name="Sutton G.G."/>
            <person name="Florea L."/>
            <person name="Halpern A.L."/>
            <person name="Mobarry C.M."/>
            <person name="Lippert R."/>
            <person name="Walenz B."/>
            <person name="Shatkay H."/>
            <person name="Dew I."/>
            <person name="Miller J.R."/>
            <person name="Flanigan M.J."/>
            <person name="Edwards N.J."/>
            <person name="Bolanos R."/>
            <person name="Fasulo D."/>
            <person name="Halldorsson B.V."/>
            <person name="Hannenhalli S."/>
            <person name="Turner R."/>
            <person name="Yooseph S."/>
            <person name="Lu F."/>
            <person name="Nusskern D.R."/>
            <person name="Shue B.C."/>
            <person name="Zheng X.H."/>
            <person name="Zhong F."/>
            <person name="Delcher A.L."/>
            <person name="Huson D.H."/>
            <person name="Kravitz S.A."/>
            <person name="Mouchard L."/>
            <person name="Reinert K."/>
            <person name="Remington K.A."/>
            <person name="Clark A.G."/>
            <person name="Waterman M.S."/>
            <person name="Eichler E.E."/>
            <person name="Adams M.D."/>
            <person name="Hunkapiller M.W."/>
            <person name="Myers E.W."/>
            <person name="Venter J.C."/>
        </authorList>
    </citation>
    <scope>NUCLEOTIDE SEQUENCE [LARGE SCALE GENOMIC DNA]</scope>
</reference>
<reference key="7">
    <citation type="journal article" date="2004" name="Genome Res.">
        <title>The status, quality, and expansion of the NIH full-length cDNA project: the Mammalian Gene Collection (MGC).</title>
        <authorList>
            <consortium name="The MGC Project Team"/>
        </authorList>
    </citation>
    <scope>NUCLEOTIDE SEQUENCE [LARGE SCALE MRNA] (ISOFORM 1)</scope>
    <source>
        <tissue>Lung</tissue>
    </source>
</reference>
<reference key="8">
    <citation type="journal article" date="1990" name="Biochem. J.">
        <title>The amino acid sequence of cytosolic aspartate aminotransferase from human liver.</title>
        <authorList>
            <person name="Doyle J.M."/>
            <person name="Schinina M.E."/>
            <person name="Bossa F."/>
            <person name="Doonan S."/>
        </authorList>
    </citation>
    <scope>PROTEIN SEQUENCE OF 2-413</scope>
    <source>
        <tissue>Liver</tissue>
    </source>
</reference>
<reference key="9">
    <citation type="journal article" date="2005" name="Neurosci. Lett.">
        <title>Amino acids and transaminases activity in ventricular CSF and in brain of normal and Alzheimer patients.</title>
        <authorList>
            <person name="D'Aniello A."/>
            <person name="Fisher G."/>
            <person name="Migliaccio N."/>
            <person name="Cammisa G."/>
            <person name="D'Aniello E."/>
            <person name="Spinelli P."/>
        </authorList>
    </citation>
    <scope>FUNCTION</scope>
</reference>
<reference key="10">
    <citation type="journal article" date="2011" name="BMC Syst. Biol.">
        <title>Initial characterization of the human central proteome.</title>
        <authorList>
            <person name="Burkard T.R."/>
            <person name="Planyavsky M."/>
            <person name="Kaupe I."/>
            <person name="Breitwieser F.P."/>
            <person name="Buerckstuemmer T."/>
            <person name="Bennett K.L."/>
            <person name="Superti-Furga G."/>
            <person name="Colinge J."/>
        </authorList>
    </citation>
    <scope>IDENTIFICATION BY MASS SPECTROMETRY [LARGE SCALE ANALYSIS]</scope>
</reference>
<reference key="11">
    <citation type="journal article" date="2011" name="J. Hum. Genet.">
        <title>Genome-wide association study identifies genetic variants in GOT1 determining serum aspartate aminotransferase levels.</title>
        <authorList>
            <person name="Shen H."/>
            <person name="Damcott C."/>
            <person name="Shuldiner S.R."/>
            <person name="Chai S."/>
            <person name="Yang R."/>
            <person name="Hu H."/>
            <person name="Gibson Q."/>
            <person name="Ryan K.A."/>
            <person name="Mitchell B.D."/>
            <person name="Gong D.W."/>
        </authorList>
    </citation>
    <scope>INVOLVEMENT IN ASTQTL1</scope>
    <scope>VARIANT ASN-389 DEL</scope>
    <scope>FUNCTION</scope>
    <scope>CATALYTIC ACTIVITY</scope>
    <scope>CHARACTERIZATION OF VARIANT ASN-389 DEL</scope>
    <scope>POLYMORPHISM</scope>
</reference>
<reference key="12">
    <citation type="journal article" date="2012" name="Early Hum. Dev.">
        <title>Relationship between glutamate, GOT and GPT levels in maternal and fetal blood: a potential mechanism for fetal neuroprotection.</title>
        <authorList>
            <person name="Zlotnik A."/>
            <person name="Tsesis S."/>
            <person name="Gruenbaum B.F."/>
            <person name="Ohayon S."/>
            <person name="Gruenbaum S.E."/>
            <person name="Boyko M."/>
            <person name="Sheiner E."/>
            <person name="Brotfain E."/>
            <person name="Shapira Y."/>
            <person name="Teichberg V.I."/>
        </authorList>
    </citation>
    <scope>FETAL BLOOD LEVELS</scope>
</reference>
<reference key="13">
    <citation type="journal article" date="2012" name="Mol. Cell. Proteomics">
        <title>Comparative large-scale characterisation of plant vs. mammal proteins reveals similar and idiosyncratic N-alpha acetylation features.</title>
        <authorList>
            <person name="Bienvenut W.V."/>
            <person name="Sumpton D."/>
            <person name="Martinez A."/>
            <person name="Lilla S."/>
            <person name="Espagne C."/>
            <person name="Meinnel T."/>
            <person name="Giglione C."/>
        </authorList>
    </citation>
    <scope>CLEAVAGE OF INITIATOR METHIONINE [LARGE SCALE ANALYSIS]</scope>
    <scope>IDENTIFICATION BY MASS SPECTROMETRY [LARGE SCALE ANALYSIS]</scope>
</reference>
<reference key="14">
    <citation type="journal article" date="2013" name="J. Proteome Res.">
        <title>Toward a comprehensive characterization of a human cancer cell phosphoproteome.</title>
        <authorList>
            <person name="Zhou H."/>
            <person name="Di Palma S."/>
            <person name="Preisinger C."/>
            <person name="Peng M."/>
            <person name="Polat A.N."/>
            <person name="Heck A.J."/>
            <person name="Mohammed S."/>
        </authorList>
    </citation>
    <scope>IDENTIFICATION BY MASS SPECTROMETRY [LARGE SCALE ANALYSIS]</scope>
    <source>
        <tissue>Erythroleukemia</tissue>
    </source>
</reference>
<reference key="15">
    <citation type="journal article" date="2014" name="J. Proteomics">
        <title>An enzyme assisted RP-RPLC approach for in-depth analysis of human liver phosphoproteome.</title>
        <authorList>
            <person name="Bian Y."/>
            <person name="Song C."/>
            <person name="Cheng K."/>
            <person name="Dong M."/>
            <person name="Wang F."/>
            <person name="Huang J."/>
            <person name="Sun D."/>
            <person name="Wang L."/>
            <person name="Ye M."/>
            <person name="Zou H."/>
        </authorList>
    </citation>
    <scope>IDENTIFICATION BY MASS SPECTROMETRY [LARGE SCALE ANALYSIS]</scope>
    <source>
        <tissue>Liver</tissue>
    </source>
</reference>
<reference key="16">
    <citation type="journal article" date="2016" name="Sci. Rep.">
        <title>2-Aminobutyric acid modulates glutathione homeostasis in the myocardium.</title>
        <authorList>
            <person name="Irino Y."/>
            <person name="Toh R."/>
            <person name="Nagao M."/>
            <person name="Mori T."/>
            <person name="Honjo T."/>
            <person name="Shinohara M."/>
            <person name="Tsuda S."/>
            <person name="Nakajima H."/>
            <person name="Satomi-Kobayashi S."/>
            <person name="Shinke T."/>
            <person name="Tanaka H."/>
            <person name="Ishida T."/>
            <person name="Miyata O."/>
            <person name="Hirata K.I."/>
        </authorList>
    </citation>
    <scope>FUNCTION</scope>
    <scope>CATALYTIC ACTIVITY</scope>
</reference>
<reference key="17">
    <citation type="submission" date="2009-08" db="PDB data bank">
        <title>Crystal structure of human glutamate oxaloacetate transaminase 1 (GOT1).</title>
        <authorList>
            <consortium name="Structural genomics consortium (SGC)"/>
        </authorList>
    </citation>
    <scope>X-RAY CRYSTALLOGRAPHY (2.05 ANGSTROMS) OF 14-412 IN COMPLEX WITH PYRIDOXAL PHOSPHATE AND TARTARIC ACID</scope>
    <scope>SUBUNIT</scope>
    <scope>PYRIDOXAL PHOSPHATE AT LYS-259</scope>
</reference>
<protein>
    <recommendedName>
        <fullName evidence="10">Aspartate aminotransferase, cytoplasmic</fullName>
        <shortName>cAspAT</shortName>
        <ecNumber evidence="5">2.6.1.1</ecNumber>
        <ecNumber evidence="2">2.6.1.3</ecNumber>
    </recommendedName>
    <alternativeName>
        <fullName>Cysteine aminotransferase, cytoplasmic</fullName>
    </alternativeName>
    <alternativeName>
        <fullName>Cysteine transaminase, cytoplasmic</fullName>
        <shortName>cCAT</shortName>
    </alternativeName>
    <alternativeName>
        <fullName>Glutamate oxaloacetate transaminase 1</fullName>
    </alternativeName>
    <alternativeName>
        <fullName>Transaminase A</fullName>
    </alternativeName>
</protein>
<evidence type="ECO:0000250" key="1"/>
<evidence type="ECO:0000250" key="2">
    <source>
        <dbReference type="UniProtKB" id="P13221"/>
    </source>
</evidence>
<evidence type="ECO:0000269" key="3">
    <source>
    </source>
</evidence>
<evidence type="ECO:0000269" key="4">
    <source>
    </source>
</evidence>
<evidence type="ECO:0000269" key="5">
    <source>
    </source>
</evidence>
<evidence type="ECO:0000269" key="6">
    <source>
    </source>
</evidence>
<evidence type="ECO:0000269" key="7">
    <source>
    </source>
</evidence>
<evidence type="ECO:0000269" key="8">
    <source ref="17"/>
</evidence>
<evidence type="ECO:0000303" key="9">
    <source>
    </source>
</evidence>
<evidence type="ECO:0000305" key="10"/>
<evidence type="ECO:0000305" key="11">
    <source>
    </source>
</evidence>
<evidence type="ECO:0000305" key="12">
    <source>
    </source>
</evidence>
<evidence type="ECO:0000312" key="13">
    <source>
        <dbReference type="HGNC" id="HGNC:4432"/>
    </source>
</evidence>
<evidence type="ECO:0007744" key="14">
    <source>
    </source>
</evidence>
<evidence type="ECO:0007829" key="15">
    <source>
        <dbReference type="PDB" id="3WZF"/>
    </source>
</evidence>
<evidence type="ECO:0007829" key="16">
    <source>
        <dbReference type="PDB" id="6DNA"/>
    </source>
</evidence>
<evidence type="ECO:0007829" key="17">
    <source>
        <dbReference type="PDB" id="6DNB"/>
    </source>
</evidence>
<evidence type="ECO:0007829" key="18">
    <source>
        <dbReference type="PDB" id="6LIG"/>
    </source>
</evidence>
<accession>P17174</accession>
<accession>B2R6R7</accession>
<accession>B7Z7E9</accession>
<accession>Q5VW80</accession>
<sequence>MAPPSVFAEVPQAQPVLVFKLTADFREDPDPRKVNLGVGAYRTDDCHPWVLPVVKKVEQKIANDNSLNHEYLPILGLAEFRSCASRLALGDDSPALKEKRVGGVQSLGGTGALRIGADFLARWYNGTNNKNTPVYVSSPTWENHNAVFSAAGFKDIRSYRYWDAEKRGLDLQGFLNDLENAPEFSIVVLHACAHNPTGIDPTPEQWKQIASVMKHRFLFPFFDSAYQGFASGNLERDAWAIRYFVSEGFEFFCAQSFSKNFGLYNERVGNLTVVGKEPESILQVLSQMEKIVRITWSNPPAQGARIVASTLSNPELFEEWTGNVKTMADRILTMRSELRARLEALKTPGTWNHITDQIGMFSFTGLNPKQVEYLVNEKHIYLLPSGRINVSGLTTKNLDYVATSIHEAVTKIQ</sequence>
<organism>
    <name type="scientific">Homo sapiens</name>
    <name type="common">Human</name>
    <dbReference type="NCBI Taxonomy" id="9606"/>
    <lineage>
        <taxon>Eukaryota</taxon>
        <taxon>Metazoa</taxon>
        <taxon>Chordata</taxon>
        <taxon>Craniata</taxon>
        <taxon>Vertebrata</taxon>
        <taxon>Euteleostomi</taxon>
        <taxon>Mammalia</taxon>
        <taxon>Eutheria</taxon>
        <taxon>Euarchontoglires</taxon>
        <taxon>Primates</taxon>
        <taxon>Haplorrhini</taxon>
        <taxon>Catarrhini</taxon>
        <taxon>Hominidae</taxon>
        <taxon>Homo</taxon>
    </lineage>
</organism>
<keyword id="KW-0002">3D-structure</keyword>
<keyword id="KW-0025">Alternative splicing</keyword>
<keyword id="KW-0028">Amino-acid biosynthesis</keyword>
<keyword id="KW-0032">Aminotransferase</keyword>
<keyword id="KW-0963">Cytoplasm</keyword>
<keyword id="KW-0903">Direct protein sequencing</keyword>
<keyword id="KW-0597">Phosphoprotein</keyword>
<keyword id="KW-1267">Proteomics identification</keyword>
<keyword id="KW-0663">Pyridoxal phosphate</keyword>
<keyword id="KW-1185">Reference proteome</keyword>
<keyword id="KW-0808">Transferase</keyword>
<feature type="initiator methionine" description="Removed" evidence="6 14">
    <location>
        <position position="1"/>
    </location>
</feature>
<feature type="chain" id="PRO_0000123879" description="Aspartate aminotransferase, cytoplasmic">
    <location>
        <begin position="2"/>
        <end position="413"/>
    </location>
</feature>
<feature type="binding site">
    <location>
        <position position="39"/>
    </location>
    <ligand>
        <name>L-aspartate</name>
        <dbReference type="ChEBI" id="CHEBI:29991"/>
    </ligand>
</feature>
<feature type="binding site">
    <location>
        <position position="141"/>
    </location>
    <ligand>
        <name>L-aspartate</name>
        <dbReference type="ChEBI" id="CHEBI:29991"/>
    </ligand>
</feature>
<feature type="binding site">
    <location>
        <position position="195"/>
    </location>
    <ligand>
        <name>L-aspartate</name>
        <dbReference type="ChEBI" id="CHEBI:29991"/>
    </ligand>
</feature>
<feature type="binding site">
    <location>
        <position position="387"/>
    </location>
    <ligand>
        <name>L-aspartate</name>
        <dbReference type="ChEBI" id="CHEBI:29991"/>
    </ligand>
</feature>
<feature type="modified residue" description="Phosphoserine" evidence="2">
    <location>
        <position position="149"/>
    </location>
</feature>
<feature type="modified residue" description="N6-(pyridoxal phosphate)lysine" evidence="1">
    <location>
        <position position="259"/>
    </location>
</feature>
<feature type="splice variant" id="VSP_055799" description="In isoform 2." evidence="9">
    <original>MAPPSVFAEVPQAQPVLVFKLTADFREDPDPRKVNLGVG</original>
    <variation>MQVWSPWKGAMCPRPHKP</variation>
    <location>
        <begin position="1"/>
        <end position="39"/>
    </location>
</feature>
<feature type="sequence variant" id="VAR_067256" description="Results in markedly diminished enzymatic activity; dbSNP:rs749913156." evidence="5">
    <location>
        <position position="389"/>
    </location>
</feature>
<feature type="sequence conflict" description="In Ref. 8; AA sequence." evidence="10" ref="8">
    <original>H</original>
    <variation>R</variation>
    <location>
        <position position="215"/>
    </location>
</feature>
<feature type="turn" evidence="17">
    <location>
        <begin position="6"/>
        <end position="9"/>
    </location>
</feature>
<feature type="helix" evidence="17">
    <location>
        <begin position="17"/>
        <end position="27"/>
    </location>
</feature>
<feature type="strand" evidence="16">
    <location>
        <begin position="29"/>
        <end position="31"/>
    </location>
</feature>
<feature type="helix" evidence="17">
    <location>
        <begin position="52"/>
        <end position="63"/>
    </location>
</feature>
<feature type="helix" evidence="17">
    <location>
        <begin position="78"/>
        <end position="89"/>
    </location>
</feature>
<feature type="helix" evidence="17">
    <location>
        <begin position="94"/>
        <end position="97"/>
    </location>
</feature>
<feature type="strand" evidence="17">
    <location>
        <begin position="101"/>
        <end position="107"/>
    </location>
</feature>
<feature type="helix" evidence="17">
    <location>
        <begin position="108"/>
        <end position="123"/>
    </location>
</feature>
<feature type="strand" evidence="17">
    <location>
        <begin position="124"/>
        <end position="128"/>
    </location>
</feature>
<feature type="strand" evidence="17">
    <location>
        <begin position="134"/>
        <end position="139"/>
    </location>
</feature>
<feature type="helix" evidence="17">
    <location>
        <begin position="142"/>
        <end position="151"/>
    </location>
</feature>
<feature type="strand" evidence="17">
    <location>
        <begin position="156"/>
        <end position="160"/>
    </location>
</feature>
<feature type="turn" evidence="17">
    <location>
        <begin position="164"/>
        <end position="167"/>
    </location>
</feature>
<feature type="helix" evidence="17">
    <location>
        <begin position="171"/>
        <end position="179"/>
    </location>
</feature>
<feature type="strand" evidence="17">
    <location>
        <begin position="186"/>
        <end position="190"/>
    </location>
</feature>
<feature type="turn" evidence="17">
    <location>
        <begin position="195"/>
        <end position="197"/>
    </location>
</feature>
<feature type="helix" evidence="17">
    <location>
        <begin position="203"/>
        <end position="216"/>
    </location>
</feature>
<feature type="strand" evidence="17">
    <location>
        <begin position="219"/>
        <end position="225"/>
    </location>
</feature>
<feature type="turn" evidence="17">
    <location>
        <begin position="227"/>
        <end position="231"/>
    </location>
</feature>
<feature type="helix" evidence="17">
    <location>
        <begin position="234"/>
        <end position="237"/>
    </location>
</feature>
<feature type="helix" evidence="17">
    <location>
        <begin position="239"/>
        <end position="246"/>
    </location>
</feature>
<feature type="strand" evidence="17">
    <location>
        <begin position="251"/>
        <end position="256"/>
    </location>
</feature>
<feature type="turn" evidence="17">
    <location>
        <begin position="258"/>
        <end position="260"/>
    </location>
</feature>
<feature type="helix" evidence="17">
    <location>
        <begin position="264"/>
        <end position="266"/>
    </location>
</feature>
<feature type="strand" evidence="17">
    <location>
        <begin position="268"/>
        <end position="274"/>
    </location>
</feature>
<feature type="helix" evidence="17">
    <location>
        <begin position="278"/>
        <end position="294"/>
    </location>
</feature>
<feature type="strand" evidence="18">
    <location>
        <begin position="296"/>
        <end position="298"/>
    </location>
</feature>
<feature type="helix" evidence="17">
    <location>
        <begin position="302"/>
        <end position="311"/>
    </location>
</feature>
<feature type="helix" evidence="17">
    <location>
        <begin position="314"/>
        <end position="344"/>
    </location>
</feature>
<feature type="helix" evidence="17">
    <location>
        <begin position="353"/>
        <end position="356"/>
    </location>
</feature>
<feature type="strand" evidence="17">
    <location>
        <begin position="359"/>
        <end position="363"/>
    </location>
</feature>
<feature type="helix" evidence="17">
    <location>
        <begin position="368"/>
        <end position="376"/>
    </location>
</feature>
<feature type="turn" evidence="15">
    <location>
        <begin position="384"/>
        <end position="386"/>
    </location>
</feature>
<feature type="strand" evidence="17">
    <location>
        <begin position="387"/>
        <end position="389"/>
    </location>
</feature>
<feature type="helix" evidence="17">
    <location>
        <begin position="390"/>
        <end position="392"/>
    </location>
</feature>
<feature type="turn" evidence="17">
    <location>
        <begin position="395"/>
        <end position="397"/>
    </location>
</feature>
<feature type="helix" evidence="17">
    <location>
        <begin position="398"/>
        <end position="411"/>
    </location>
</feature>
<dbReference type="EC" id="2.6.1.1" evidence="5"/>
<dbReference type="EC" id="2.6.1.3" evidence="2"/>
<dbReference type="EMBL" id="M37400">
    <property type="protein sequence ID" value="AAA35563.1"/>
    <property type="molecule type" value="mRNA"/>
</dbReference>
<dbReference type="EMBL" id="AF080467">
    <property type="protein sequence ID" value="AAC32851.1"/>
    <property type="molecule type" value="Genomic_DNA"/>
</dbReference>
<dbReference type="EMBL" id="AF080459">
    <property type="protein sequence ID" value="AAC32851.1"/>
    <property type="status" value="JOINED"/>
    <property type="molecule type" value="Genomic_DNA"/>
</dbReference>
<dbReference type="EMBL" id="AF080460">
    <property type="protein sequence ID" value="AAC32851.1"/>
    <property type="status" value="JOINED"/>
    <property type="molecule type" value="Genomic_DNA"/>
</dbReference>
<dbReference type="EMBL" id="AF080461">
    <property type="protein sequence ID" value="AAC32851.1"/>
    <property type="status" value="JOINED"/>
    <property type="molecule type" value="Genomic_DNA"/>
</dbReference>
<dbReference type="EMBL" id="AF080462">
    <property type="protein sequence ID" value="AAC32851.1"/>
    <property type="status" value="JOINED"/>
    <property type="molecule type" value="Genomic_DNA"/>
</dbReference>
<dbReference type="EMBL" id="AF080463">
    <property type="protein sequence ID" value="AAC32851.1"/>
    <property type="status" value="JOINED"/>
    <property type="molecule type" value="Genomic_DNA"/>
</dbReference>
<dbReference type="EMBL" id="AF080464">
    <property type="protein sequence ID" value="AAC32851.1"/>
    <property type="status" value="JOINED"/>
    <property type="molecule type" value="Genomic_DNA"/>
</dbReference>
<dbReference type="EMBL" id="AF080465">
    <property type="protein sequence ID" value="AAC32851.1"/>
    <property type="status" value="JOINED"/>
    <property type="molecule type" value="Genomic_DNA"/>
</dbReference>
<dbReference type="EMBL" id="AF080466">
    <property type="protein sequence ID" value="AAC32851.1"/>
    <property type="status" value="JOINED"/>
    <property type="molecule type" value="Genomic_DNA"/>
</dbReference>
<dbReference type="EMBL" id="AF052153">
    <property type="protein sequence ID" value="AAC28622.1"/>
    <property type="molecule type" value="mRNA"/>
</dbReference>
<dbReference type="EMBL" id="AK301916">
    <property type="protein sequence ID" value="BAH13585.1"/>
    <property type="molecule type" value="mRNA"/>
</dbReference>
<dbReference type="EMBL" id="AK312684">
    <property type="protein sequence ID" value="BAG35564.1"/>
    <property type="molecule type" value="mRNA"/>
</dbReference>
<dbReference type="EMBL" id="AL391684">
    <property type="status" value="NOT_ANNOTATED_CDS"/>
    <property type="molecule type" value="Genomic_DNA"/>
</dbReference>
<dbReference type="EMBL" id="CH471066">
    <property type="protein sequence ID" value="EAW49869.1"/>
    <property type="molecule type" value="Genomic_DNA"/>
</dbReference>
<dbReference type="EMBL" id="BC000498">
    <property type="protein sequence ID" value="AAH00498.1"/>
    <property type="molecule type" value="mRNA"/>
</dbReference>
<dbReference type="CCDS" id="CCDS7479.1">
    <molecule id="P17174-1"/>
</dbReference>
<dbReference type="PIR" id="S13035">
    <property type="entry name" value="S13035"/>
</dbReference>
<dbReference type="PIR" id="S29027">
    <property type="entry name" value="S29027"/>
</dbReference>
<dbReference type="RefSeq" id="NP_002070.1">
    <molecule id="P17174-1"/>
    <property type="nucleotide sequence ID" value="NM_002079.3"/>
</dbReference>
<dbReference type="PDB" id="3II0">
    <property type="method" value="X-ray"/>
    <property type="resolution" value="2.05 A"/>
    <property type="chains" value="A/B/C/D=14-412"/>
</dbReference>
<dbReference type="PDB" id="3WZF">
    <property type="method" value="X-ray"/>
    <property type="resolution" value="2.99 A"/>
    <property type="chains" value="A=2-413"/>
</dbReference>
<dbReference type="PDB" id="6DNA">
    <property type="method" value="X-ray"/>
    <property type="resolution" value="3.00 A"/>
    <property type="chains" value="A/B/C/D/E/F=6-410"/>
</dbReference>
<dbReference type="PDB" id="6DNB">
    <property type="method" value="X-ray"/>
    <property type="resolution" value="1.70 A"/>
    <property type="chains" value="A=3-413"/>
</dbReference>
<dbReference type="PDB" id="6DND">
    <property type="method" value="X-ray"/>
    <property type="resolution" value="2.10 A"/>
    <property type="chains" value="A/B=3-413"/>
</dbReference>
<dbReference type="PDB" id="6LIG">
    <property type="method" value="X-ray"/>
    <property type="resolution" value="2.62 A"/>
    <property type="chains" value="A/B=3-413"/>
</dbReference>
<dbReference type="PDBsum" id="3II0"/>
<dbReference type="PDBsum" id="3WZF"/>
<dbReference type="PDBsum" id="6DNA"/>
<dbReference type="PDBsum" id="6DNB"/>
<dbReference type="PDBsum" id="6DND"/>
<dbReference type="PDBsum" id="6LIG"/>
<dbReference type="SMR" id="P17174"/>
<dbReference type="BioGRID" id="109067">
    <property type="interactions" value="273"/>
</dbReference>
<dbReference type="FunCoup" id="P17174">
    <property type="interactions" value="2117"/>
</dbReference>
<dbReference type="IntAct" id="P17174">
    <property type="interactions" value="191"/>
</dbReference>
<dbReference type="MINT" id="P17174"/>
<dbReference type="STRING" id="9606.ENSP00000359539"/>
<dbReference type="BindingDB" id="P17174"/>
<dbReference type="ChEMBL" id="CHEMBL2189139"/>
<dbReference type="DrugBank" id="DB00210">
    <property type="generic name" value="Adapalene"/>
</dbReference>
<dbReference type="DrugBank" id="DB00128">
    <property type="generic name" value="Aspartic acid"/>
</dbReference>
<dbReference type="DrugBank" id="DB09130">
    <property type="generic name" value="Copper"/>
</dbReference>
<dbReference type="DrugBank" id="DB00151">
    <property type="generic name" value="Cysteine"/>
</dbReference>
<dbReference type="DrugBank" id="DB00142">
    <property type="generic name" value="Glutamic acid"/>
</dbReference>
<dbReference type="DrugBank" id="DB04299">
    <property type="generic name" value="Maleic acid"/>
</dbReference>
<dbReference type="DrugBank" id="DB00114">
    <property type="generic name" value="Pyridoxal phosphate"/>
</dbReference>
<dbReference type="DrugCentral" id="P17174"/>
<dbReference type="GlyGen" id="P17174">
    <property type="glycosylation" value="2 sites, 1 O-linked glycan (1 site)"/>
</dbReference>
<dbReference type="iPTMnet" id="P17174"/>
<dbReference type="PhosphoSitePlus" id="P17174"/>
<dbReference type="SwissPalm" id="P17174"/>
<dbReference type="BioMuta" id="GOT1"/>
<dbReference type="DMDM" id="5902703"/>
<dbReference type="REPRODUCTION-2DPAGE" id="IPI00219029"/>
<dbReference type="jPOST" id="P17174"/>
<dbReference type="MassIVE" id="P17174"/>
<dbReference type="PaxDb" id="9606-ENSP00000359539"/>
<dbReference type="PeptideAtlas" id="P17174"/>
<dbReference type="PRIDE" id="P17174"/>
<dbReference type="ProteomicsDB" id="53459">
    <molecule id="P17174-1"/>
</dbReference>
<dbReference type="ProteomicsDB" id="6862"/>
<dbReference type="Pumba" id="P17174"/>
<dbReference type="Antibodypedia" id="31077">
    <property type="antibodies" value="565 antibodies from 37 providers"/>
</dbReference>
<dbReference type="DNASU" id="2805"/>
<dbReference type="Ensembl" id="ENST00000370508.7">
    <molecule id="P17174-1"/>
    <property type="protein sequence ID" value="ENSP00000359539.5"/>
    <property type="gene ID" value="ENSG00000120053.12"/>
</dbReference>
<dbReference type="GeneID" id="2805"/>
<dbReference type="KEGG" id="hsa:2805"/>
<dbReference type="MANE-Select" id="ENST00000370508.7">
    <property type="protein sequence ID" value="ENSP00000359539.5"/>
    <property type="RefSeq nucleotide sequence ID" value="NM_002079.3"/>
    <property type="RefSeq protein sequence ID" value="NP_002070.1"/>
</dbReference>
<dbReference type="UCSC" id="uc001kpr.4">
    <molecule id="P17174-1"/>
    <property type="organism name" value="human"/>
</dbReference>
<dbReference type="AGR" id="HGNC:4432"/>
<dbReference type="CTD" id="2805"/>
<dbReference type="DisGeNET" id="2805"/>
<dbReference type="GeneCards" id="GOT1"/>
<dbReference type="HGNC" id="HGNC:4432">
    <property type="gene designation" value="GOT1"/>
</dbReference>
<dbReference type="HPA" id="ENSG00000120053">
    <property type="expression patterns" value="Tissue enhanced (heart muscle, skeletal muscle, tongue)"/>
</dbReference>
<dbReference type="MalaCards" id="GOT1"/>
<dbReference type="MIM" id="138180">
    <property type="type" value="gene"/>
</dbReference>
<dbReference type="MIM" id="614419">
    <property type="type" value="phenotype"/>
</dbReference>
<dbReference type="neXtProt" id="NX_P17174"/>
<dbReference type="OpenTargets" id="ENSG00000120053"/>
<dbReference type="PharmGKB" id="PA28817"/>
<dbReference type="VEuPathDB" id="HostDB:ENSG00000120053"/>
<dbReference type="eggNOG" id="KOG1412">
    <property type="taxonomic scope" value="Eukaryota"/>
</dbReference>
<dbReference type="GeneTree" id="ENSGT00950000183082"/>
<dbReference type="HOGENOM" id="CLU_032440_1_2_1"/>
<dbReference type="InParanoid" id="P17174"/>
<dbReference type="OMA" id="GTWTHIT"/>
<dbReference type="OrthoDB" id="6752799at2759"/>
<dbReference type="PAN-GO" id="P17174">
    <property type="GO annotations" value="3 GO annotations based on evolutionary models"/>
</dbReference>
<dbReference type="PhylomeDB" id="P17174"/>
<dbReference type="TreeFam" id="TF314089"/>
<dbReference type="BioCyc" id="MetaCyc:HS04361-MONOMER"/>
<dbReference type="BRENDA" id="2.6.1.1">
    <property type="organism ID" value="2681"/>
</dbReference>
<dbReference type="BRENDA" id="2.6.1.64">
    <property type="organism ID" value="2681"/>
</dbReference>
<dbReference type="PathwayCommons" id="P17174"/>
<dbReference type="Reactome" id="R-HSA-1237112">
    <property type="pathway name" value="Methionine salvage pathway"/>
</dbReference>
<dbReference type="Reactome" id="R-HSA-8963693">
    <property type="pathway name" value="Aspartate and asparagine metabolism"/>
</dbReference>
<dbReference type="Reactome" id="R-HSA-9856872">
    <property type="pathway name" value="Malate-aspartate shuttle"/>
</dbReference>
<dbReference type="SABIO-RK" id="P17174"/>
<dbReference type="SignaLink" id="P17174"/>
<dbReference type="SIGNOR" id="P17174"/>
<dbReference type="BioGRID-ORCS" id="2805">
    <property type="hits" value="25 hits in 1159 CRISPR screens"/>
</dbReference>
<dbReference type="ChiTaRS" id="GOT1">
    <property type="organism name" value="human"/>
</dbReference>
<dbReference type="EvolutionaryTrace" id="P17174"/>
<dbReference type="GeneWiki" id="GOT1"/>
<dbReference type="GenomeRNAi" id="2805"/>
<dbReference type="Pharos" id="P17174">
    <property type="development level" value="Tbio"/>
</dbReference>
<dbReference type="PRO" id="PR:P17174"/>
<dbReference type="Proteomes" id="UP000005640">
    <property type="component" value="Chromosome 10"/>
</dbReference>
<dbReference type="RNAct" id="P17174">
    <property type="molecule type" value="protein"/>
</dbReference>
<dbReference type="Bgee" id="ENSG00000120053">
    <property type="expression patterns" value="Expressed in heart right ventricle and 205 other cell types or tissues"/>
</dbReference>
<dbReference type="ExpressionAtlas" id="P17174">
    <property type="expression patterns" value="baseline and differential"/>
</dbReference>
<dbReference type="GO" id="GO:0043679">
    <property type="term" value="C:axon terminus"/>
    <property type="evidence" value="ECO:0007669"/>
    <property type="project" value="Ensembl"/>
</dbReference>
<dbReference type="GO" id="GO:0005737">
    <property type="term" value="C:cytoplasm"/>
    <property type="evidence" value="ECO:0000314"/>
    <property type="project" value="UniProtKB"/>
</dbReference>
<dbReference type="GO" id="GO:0005829">
    <property type="term" value="C:cytosol"/>
    <property type="evidence" value="ECO:0000318"/>
    <property type="project" value="GO_Central"/>
</dbReference>
<dbReference type="GO" id="GO:0070062">
    <property type="term" value="C:extracellular exosome"/>
    <property type="evidence" value="ECO:0007005"/>
    <property type="project" value="UniProtKB"/>
</dbReference>
<dbReference type="GO" id="GO:0005634">
    <property type="term" value="C:nucleus"/>
    <property type="evidence" value="ECO:0007005"/>
    <property type="project" value="UniProtKB"/>
</dbReference>
<dbReference type="GO" id="GO:0031406">
    <property type="term" value="F:carboxylic acid binding"/>
    <property type="evidence" value="ECO:0007669"/>
    <property type="project" value="Ensembl"/>
</dbReference>
<dbReference type="GO" id="GO:0004069">
    <property type="term" value="F:L-aspartate:2-oxoglutarate aminotransferase activity"/>
    <property type="evidence" value="ECO:0000314"/>
    <property type="project" value="UniProtKB"/>
</dbReference>
<dbReference type="GO" id="GO:0047801">
    <property type="term" value="F:L-cysteine transaminase activity"/>
    <property type="evidence" value="ECO:0000250"/>
    <property type="project" value="UniProtKB"/>
</dbReference>
<dbReference type="GO" id="GO:0004609">
    <property type="term" value="F:phosphatidylserine decarboxylase activity"/>
    <property type="evidence" value="ECO:0007669"/>
    <property type="project" value="Ensembl"/>
</dbReference>
<dbReference type="GO" id="GO:0030170">
    <property type="term" value="F:pyridoxal phosphate binding"/>
    <property type="evidence" value="ECO:0007669"/>
    <property type="project" value="InterPro"/>
</dbReference>
<dbReference type="GO" id="GO:0006103">
    <property type="term" value="P:2-oxoglutarate metabolic process"/>
    <property type="evidence" value="ECO:0000250"/>
    <property type="project" value="UniProtKB"/>
</dbReference>
<dbReference type="GO" id="GO:0006532">
    <property type="term" value="P:aspartate biosynthetic process"/>
    <property type="evidence" value="ECO:0000318"/>
    <property type="project" value="GO_Central"/>
</dbReference>
<dbReference type="GO" id="GO:0006533">
    <property type="term" value="P:aspartate catabolic process"/>
    <property type="evidence" value="ECO:0000314"/>
    <property type="project" value="UniProtKB"/>
</dbReference>
<dbReference type="GO" id="GO:0006531">
    <property type="term" value="P:aspartate metabolic process"/>
    <property type="evidence" value="ECO:0000250"/>
    <property type="project" value="UniProtKB"/>
</dbReference>
<dbReference type="GO" id="GO:0032869">
    <property type="term" value="P:cellular response to insulin stimulus"/>
    <property type="evidence" value="ECO:0000270"/>
    <property type="project" value="UniProtKB"/>
</dbReference>
<dbReference type="GO" id="GO:0071260">
    <property type="term" value="P:cellular response to mechanical stimulus"/>
    <property type="evidence" value="ECO:0007669"/>
    <property type="project" value="Ensembl"/>
</dbReference>
<dbReference type="GO" id="GO:0055089">
    <property type="term" value="P:fatty acid homeostasis"/>
    <property type="evidence" value="ECO:0007669"/>
    <property type="project" value="Ensembl"/>
</dbReference>
<dbReference type="GO" id="GO:0006094">
    <property type="term" value="P:gluconeogenesis"/>
    <property type="evidence" value="ECO:0007669"/>
    <property type="project" value="Ensembl"/>
</dbReference>
<dbReference type="GO" id="GO:0019550">
    <property type="term" value="P:glutamate catabolic process to aspartate"/>
    <property type="evidence" value="ECO:0007669"/>
    <property type="project" value="Ensembl"/>
</dbReference>
<dbReference type="GO" id="GO:0006536">
    <property type="term" value="P:glutamate metabolic process"/>
    <property type="evidence" value="ECO:0000250"/>
    <property type="project" value="UniProtKB"/>
</dbReference>
<dbReference type="GO" id="GO:0006114">
    <property type="term" value="P:glycerol biosynthetic process"/>
    <property type="evidence" value="ECO:0000250"/>
    <property type="project" value="UniProtKB"/>
</dbReference>
<dbReference type="GO" id="GO:0097054">
    <property type="term" value="P:L-glutamate biosynthetic process"/>
    <property type="evidence" value="ECO:0007669"/>
    <property type="project" value="Ensembl"/>
</dbReference>
<dbReference type="GO" id="GO:0043490">
    <property type="term" value="P:malate-aspartate shuttle"/>
    <property type="evidence" value="ECO:0000315"/>
    <property type="project" value="FlyBase"/>
</dbReference>
<dbReference type="GO" id="GO:0032966">
    <property type="term" value="P:negative regulation of collagen biosynthetic process"/>
    <property type="evidence" value="ECO:0007669"/>
    <property type="project" value="Ensembl"/>
</dbReference>
<dbReference type="GO" id="GO:0051481">
    <property type="term" value="P:negative regulation of cytosolic calcium ion concentration"/>
    <property type="evidence" value="ECO:0007669"/>
    <property type="project" value="Ensembl"/>
</dbReference>
<dbReference type="GO" id="GO:0051902">
    <property type="term" value="P:negative regulation of mitochondrial depolarization"/>
    <property type="evidence" value="ECO:0007669"/>
    <property type="project" value="Ensembl"/>
</dbReference>
<dbReference type="GO" id="GO:0007219">
    <property type="term" value="P:Notch signaling pathway"/>
    <property type="evidence" value="ECO:0007669"/>
    <property type="project" value="Ensembl"/>
</dbReference>
<dbReference type="GO" id="GO:0006107">
    <property type="term" value="P:oxaloacetate metabolic process"/>
    <property type="evidence" value="ECO:0007669"/>
    <property type="project" value="Ensembl"/>
</dbReference>
<dbReference type="GO" id="GO:0030511">
    <property type="term" value="P:positive regulation of transforming growth factor beta receptor signaling pathway"/>
    <property type="evidence" value="ECO:0007669"/>
    <property type="project" value="Ensembl"/>
</dbReference>
<dbReference type="GO" id="GO:0046686">
    <property type="term" value="P:response to cadmium ion"/>
    <property type="evidence" value="ECO:0007669"/>
    <property type="project" value="Ensembl"/>
</dbReference>
<dbReference type="GO" id="GO:0009743">
    <property type="term" value="P:response to carbohydrate"/>
    <property type="evidence" value="ECO:0007669"/>
    <property type="project" value="Ensembl"/>
</dbReference>
<dbReference type="GO" id="GO:0051384">
    <property type="term" value="P:response to glucocorticoid"/>
    <property type="evidence" value="ECO:0000270"/>
    <property type="project" value="UniProtKB"/>
</dbReference>
<dbReference type="GO" id="GO:0035902">
    <property type="term" value="P:response to immobilization stress"/>
    <property type="evidence" value="ECO:0007669"/>
    <property type="project" value="Ensembl"/>
</dbReference>
<dbReference type="GO" id="GO:1990267">
    <property type="term" value="P:response to transition metal nanoparticle"/>
    <property type="evidence" value="ECO:0007669"/>
    <property type="project" value="Ensembl"/>
</dbReference>
<dbReference type="GO" id="GO:0060290">
    <property type="term" value="P:transdifferentiation"/>
    <property type="evidence" value="ECO:0007669"/>
    <property type="project" value="Ensembl"/>
</dbReference>
<dbReference type="CDD" id="cd00609">
    <property type="entry name" value="AAT_like"/>
    <property type="match status" value="1"/>
</dbReference>
<dbReference type="FunFam" id="3.40.640.10:FF:000044">
    <property type="entry name" value="Aspartate aminotransferase"/>
    <property type="match status" value="1"/>
</dbReference>
<dbReference type="FunFam" id="3.90.1150.10:FF:000001">
    <property type="entry name" value="Aspartate aminotransferase"/>
    <property type="match status" value="1"/>
</dbReference>
<dbReference type="Gene3D" id="3.90.1150.10">
    <property type="entry name" value="Aspartate Aminotransferase, domain 1"/>
    <property type="match status" value="1"/>
</dbReference>
<dbReference type="Gene3D" id="3.40.640.10">
    <property type="entry name" value="Type I PLP-dependent aspartate aminotransferase-like (Major domain)"/>
    <property type="match status" value="1"/>
</dbReference>
<dbReference type="InterPro" id="IPR004839">
    <property type="entry name" value="Aminotransferase_I/II_large"/>
</dbReference>
<dbReference type="InterPro" id="IPR000796">
    <property type="entry name" value="Asp_trans"/>
</dbReference>
<dbReference type="InterPro" id="IPR004838">
    <property type="entry name" value="NHTrfase_class1_PyrdxlP-BS"/>
</dbReference>
<dbReference type="InterPro" id="IPR015424">
    <property type="entry name" value="PyrdxlP-dep_Trfase"/>
</dbReference>
<dbReference type="InterPro" id="IPR015421">
    <property type="entry name" value="PyrdxlP-dep_Trfase_major"/>
</dbReference>
<dbReference type="InterPro" id="IPR015422">
    <property type="entry name" value="PyrdxlP-dep_Trfase_small"/>
</dbReference>
<dbReference type="NCBIfam" id="NF006719">
    <property type="entry name" value="PRK09257.1"/>
    <property type="match status" value="1"/>
</dbReference>
<dbReference type="PANTHER" id="PTHR11879">
    <property type="entry name" value="ASPARTATE AMINOTRANSFERASE"/>
    <property type="match status" value="1"/>
</dbReference>
<dbReference type="PANTHER" id="PTHR11879:SF3">
    <property type="entry name" value="ASPARTATE AMINOTRANSFERASE, CYTOPLASMIC"/>
    <property type="match status" value="1"/>
</dbReference>
<dbReference type="Pfam" id="PF00155">
    <property type="entry name" value="Aminotran_1_2"/>
    <property type="match status" value="1"/>
</dbReference>
<dbReference type="PRINTS" id="PR00799">
    <property type="entry name" value="TRANSAMINASE"/>
</dbReference>
<dbReference type="SUPFAM" id="SSF53383">
    <property type="entry name" value="PLP-dependent transferases"/>
    <property type="match status" value="1"/>
</dbReference>
<dbReference type="PROSITE" id="PS00105">
    <property type="entry name" value="AA_TRANSFER_CLASS_1"/>
    <property type="match status" value="1"/>
</dbReference>
<name>AATC_HUMAN</name>
<comment type="function">
    <text evidence="3 5 7">Biosynthesis of L-glutamate from L-aspartate or L-cysteine (PubMed:21900944). Important regulator of levels of glutamate, the major excitatory neurotransmitter of the vertebrate central nervous system. Acts as a scavenger of glutamate in brain neuroprotection. The aspartate aminotransferase activity is involved in hepatic glucose synthesis during development and in adipocyte glyceroneogenesis. Using L-cysteine as substrate, regulates levels of mercaptopyruvate, an important source of hydrogen sulfide. Mercaptopyruvate is converted into H(2)S via the action of 3-mercaptopyruvate sulfurtransferase (3MST). Hydrogen sulfide is an important synaptic modulator and neuroprotectant in the brain. In addition, catalyzes (2S)-2-aminobutanoate, a by-product in the cysteine biosynthesis pathway (PubMed:27827456).</text>
</comment>
<comment type="catalytic activity">
    <reaction evidence="5">
        <text>L-aspartate + 2-oxoglutarate = oxaloacetate + L-glutamate</text>
        <dbReference type="Rhea" id="RHEA:21824"/>
        <dbReference type="ChEBI" id="CHEBI:16452"/>
        <dbReference type="ChEBI" id="CHEBI:16810"/>
        <dbReference type="ChEBI" id="CHEBI:29985"/>
        <dbReference type="ChEBI" id="CHEBI:29991"/>
        <dbReference type="EC" id="2.6.1.1"/>
    </reaction>
    <physiologicalReaction direction="left-to-right" evidence="2">
        <dbReference type="Rhea" id="RHEA:21825"/>
    </physiologicalReaction>
</comment>
<comment type="catalytic activity">
    <reaction evidence="2">
        <text>L-cysteine + 2-oxoglutarate = 2-oxo-3-sulfanylpropanoate + L-glutamate</text>
        <dbReference type="Rhea" id="RHEA:17441"/>
        <dbReference type="ChEBI" id="CHEBI:16810"/>
        <dbReference type="ChEBI" id="CHEBI:29985"/>
        <dbReference type="ChEBI" id="CHEBI:35235"/>
        <dbReference type="ChEBI" id="CHEBI:57678"/>
        <dbReference type="EC" id="2.6.1.3"/>
    </reaction>
    <physiologicalReaction direction="left-to-right" evidence="2">
        <dbReference type="Rhea" id="RHEA:17442"/>
    </physiologicalReaction>
</comment>
<comment type="catalytic activity">
    <reaction evidence="7">
        <text>(2S)-2-aminobutanoate + 2-oxoglutarate = 2-oxobutanoate + L-glutamate</text>
        <dbReference type="Rhea" id="RHEA:70223"/>
        <dbReference type="ChEBI" id="CHEBI:16763"/>
        <dbReference type="ChEBI" id="CHEBI:16810"/>
        <dbReference type="ChEBI" id="CHEBI:29985"/>
        <dbReference type="ChEBI" id="CHEBI:74359"/>
    </reaction>
    <physiologicalReaction direction="right-to-left" evidence="7">
        <dbReference type="Rhea" id="RHEA:70225"/>
    </physiologicalReaction>
</comment>
<comment type="catalytic activity">
    <reaction evidence="2">
        <text>3-sulfino-L-alanine + 2-oxoglutarate = 3-sulfinopyruvate + L-glutamate</text>
        <dbReference type="Rhea" id="RHEA:70295"/>
        <dbReference type="ChEBI" id="CHEBI:16810"/>
        <dbReference type="ChEBI" id="CHEBI:29985"/>
        <dbReference type="ChEBI" id="CHEBI:61085"/>
        <dbReference type="ChEBI" id="CHEBI:140699"/>
    </reaction>
    <physiologicalReaction direction="right-to-left" evidence="2">
        <dbReference type="Rhea" id="RHEA:70297"/>
    </physiologicalReaction>
</comment>
<comment type="cofactor">
    <cofactor>
        <name>pyridoxal 5'-phosphate</name>
        <dbReference type="ChEBI" id="CHEBI:597326"/>
    </cofactor>
</comment>
<comment type="subunit">
    <text evidence="8">Homodimer.</text>
</comment>
<comment type="subcellular location">
    <subcellularLocation>
        <location evidence="4">Cytoplasm</location>
    </subcellularLocation>
</comment>
<comment type="alternative products">
    <event type="alternative splicing"/>
    <isoform>
        <id>P17174-1</id>
        <name>1</name>
        <sequence type="displayed"/>
    </isoform>
    <isoform>
        <id>P17174-2</id>
        <name>2</name>
        <sequence type="described" ref="VSP_055799"/>
    </isoform>
</comment>
<comment type="polymorphism">
    <text evidence="5">Genetic variations in GOT1 are associated with low serum aspartate aminotransferase and define the aspartate aminotransferase serum level quantitative trait locus 1 (ASTQTL1) [MIM:614419].</text>
</comment>
<comment type="miscellaneous">
    <text>In eukaryotes there are cytoplasmic, mitochondrial and chloroplastic isozymes.</text>
</comment>
<comment type="miscellaneous">
    <text evidence="11 12">Aspartate aminotransferase activity found to be increased in cerebral spinal fluid (CSF) of patients with Alzheimer disease (PubMed:16039064). Fetal serum levels of the enzyme in the umbilical artery and vein are found to be significantly higher than maternal serum levels (PubMed:22633534).</text>
</comment>
<comment type="similarity">
    <text evidence="10">Belongs to the class-I pyridoxal-phosphate-dependent aminotransferase family.</text>
</comment>
<proteinExistence type="evidence at protein level"/>